<protein>
    <recommendedName>
        <fullName>(+)-caryolan-1-ol synthase</fullName>
        <ecNumber>4.2.1.138</ecNumber>
    </recommendedName>
    <alternativeName>
        <fullName>(+)-beta-caryophyllene synthase</fullName>
        <ecNumber>4.2.3.89</ecNumber>
    </alternativeName>
</protein>
<name>GCOA_STRGG</name>
<comment type="function">
    <text evidence="2">Sesquiterpene cyclase that first catalyzes the cyclization of farnesyl diphosphate (FPP) to the bicyclic sesquiterpene (+)-beta-caryophyllene intermediate, and then its conversion to (+)-caryolan-1-ol via a second cyclization and the addition of a water molecule.</text>
</comment>
<comment type="catalytic activity">
    <reaction evidence="2">
        <text>(2E,6E)-farnesyl diphosphate = (+)-(E)-beta-caryophyllene + diphosphate</text>
        <dbReference type="Rhea" id="RHEA:31815"/>
        <dbReference type="ChEBI" id="CHEBI:33019"/>
        <dbReference type="ChEBI" id="CHEBI:63190"/>
        <dbReference type="ChEBI" id="CHEBI:175763"/>
        <dbReference type="EC" id="4.2.3.89"/>
    </reaction>
</comment>
<comment type="catalytic activity">
    <reaction evidence="2">
        <text>(+)-(E)-beta-caryophyllene + H2O = (+)-caryolan-1-ol</text>
        <dbReference type="Rhea" id="RHEA:31795"/>
        <dbReference type="ChEBI" id="CHEBI:15377"/>
        <dbReference type="ChEBI" id="CHEBI:63190"/>
        <dbReference type="ChEBI" id="CHEBI:63196"/>
        <dbReference type="EC" id="4.2.1.138"/>
    </reaction>
</comment>
<comment type="cofactor">
    <cofactor evidence="2">
        <name>Mg(2+)</name>
        <dbReference type="ChEBI" id="CHEBI:18420"/>
    </cofactor>
    <cofactor evidence="2">
        <name>Mn(2+)</name>
        <dbReference type="ChEBI" id="CHEBI:29035"/>
    </cofactor>
    <text evidence="2">Binds 3 Mg(2+) ions per subunit. To a lesser extent, can also use Mn(2+) instead of Mg(2+). Cannot use Fe(2+), Co(2+), Zn(2+), Ni(2+), or Cu(2+).</text>
</comment>
<comment type="biophysicochemical properties">
    <kinetics>
        <KM evidence="2">95.6 nM for farnesyl diphosphate (at pH 7.5 and 30 degrees Celsius)</KM>
        <text>kcat is 0.025 sec(-1) for (+)-caryolan-1-ol formation (at pH 7.5 and 30 degrees Celsius).</text>
    </kinetics>
    <phDependence>
        <text evidence="2">Optimum pH is 7.5 for (+)-caryolan-1-ol synthesis.</text>
    </phDependence>
    <temperatureDependence>
        <text evidence="2">Optimum temperature is 30 degrees Celsius for (+)-caryolan-1-ol synthesis.</text>
    </temperatureDependence>
</comment>
<comment type="pathway">
    <text>Secondary metabolite biosynthesis; terpenoid biosynthesis.</text>
</comment>
<comment type="induction">
    <text evidence="2">Expressed under the control of A-factor (2-isocapryloyl-3R-hydroxymethyl-gamma-butyrolactone), in an AdpA-dependent manner.</text>
</comment>
<comment type="domain">
    <text evidence="1">The Asp-Asp-Xaa-Xaa-Asp/Glu (DDXXD/E) motif is important for the catalytic activity, presumably through binding to Mg(2+).</text>
</comment>
<comment type="disruption phenotype">
    <text evidence="2">Cells lacking this gene do not produce (+)-caryolan-1-ol.</text>
</comment>
<comment type="miscellaneous">
    <text>A study of the reaction mechanism indicates that (+)-caryolan-1-ol is synthesized by a proton attack on the C-8/C-9 double bond of (+)-beta-caryophyllene.</text>
</comment>
<comment type="similarity">
    <text evidence="3">Belongs to the terpene synthase family.</text>
</comment>
<organism>
    <name type="scientific">Streptomyces griseus subsp. griseus (strain JCM 4626 / CBS 651.72 / NBRC 13350 / KCC S-0626 / ISP 5235)</name>
    <dbReference type="NCBI Taxonomy" id="455632"/>
    <lineage>
        <taxon>Bacteria</taxon>
        <taxon>Bacillati</taxon>
        <taxon>Actinomycetota</taxon>
        <taxon>Actinomycetes</taxon>
        <taxon>Kitasatosporales</taxon>
        <taxon>Streptomycetaceae</taxon>
        <taxon>Streptomyces</taxon>
    </lineage>
</organism>
<gene>
    <name type="primary">gcoA</name>
    <name type="ordered locus">SGR_2079</name>
</gene>
<accession>B1W019</accession>
<sequence length="335" mass="37906">MSQITLPAFHMPFQSAGCHPGLAETREAAWEWAAAEGLDLSVPARRKMIRTRPELWISLIFPQATQAHLDLFCQWLFWAFLVDDEFDDGPAGRDPLMCERAIARLVDVFDGAAPNGPMERALAGLRDRTCRGRSPQWNRQFRRDTAAWLWTYYAEAVERAAGQVPSRAEFAKHRRDSVAMQPFLCLHEITAGIDLPDSARSLPAYIALRNAVTDHSGLCNDICSFEKEAALGYEHNAVRLIQRDRGSTLQEAVDEAGIQLARIAERVQRAERELIEEIEAAGIDGPTRTALERCVRDYRGLVRGDFDYHARAERYTRPDLVELDERDSLSRHFAA</sequence>
<feature type="chain" id="PRO_0000418814" description="(+)-caryolan-1-ol synthase">
    <location>
        <begin position="1"/>
        <end position="335"/>
    </location>
</feature>
<feature type="short sequence motif" description="DDXXD motif">
    <location>
        <begin position="83"/>
        <end position="87"/>
    </location>
</feature>
<feature type="short sequence motif" description="NSE/DTE motif">
    <location>
        <begin position="220"/>
        <end position="228"/>
    </location>
</feature>
<feature type="binding site" evidence="1">
    <location>
        <position position="83"/>
    </location>
    <ligand>
        <name>Mg(2+)</name>
        <dbReference type="ChEBI" id="CHEBI:18420"/>
        <label>1</label>
    </ligand>
</feature>
<feature type="binding site" evidence="1">
    <location>
        <position position="83"/>
    </location>
    <ligand>
        <name>Mg(2+)</name>
        <dbReference type="ChEBI" id="CHEBI:18420"/>
        <label>2</label>
    </ligand>
</feature>
<feature type="binding site" evidence="1">
    <location>
        <position position="87"/>
    </location>
    <ligand>
        <name>Mg(2+)</name>
        <dbReference type="ChEBI" id="CHEBI:18420"/>
        <label>1</label>
    </ligand>
</feature>
<feature type="binding site" evidence="1">
    <location>
        <position position="87"/>
    </location>
    <ligand>
        <name>Mg(2+)</name>
        <dbReference type="ChEBI" id="CHEBI:18420"/>
        <label>2</label>
    </ligand>
</feature>
<feature type="binding site" evidence="1">
    <location>
        <position position="220"/>
    </location>
    <ligand>
        <name>Mg(2+)</name>
        <dbReference type="ChEBI" id="CHEBI:18420"/>
        <label>3</label>
    </ligand>
</feature>
<feature type="binding site" evidence="1">
    <location>
        <position position="224"/>
    </location>
    <ligand>
        <name>Mg(2+)</name>
        <dbReference type="ChEBI" id="CHEBI:18420"/>
        <label>3</label>
    </ligand>
</feature>
<feature type="binding site" evidence="1">
    <location>
        <position position="228"/>
    </location>
    <ligand>
        <name>Mg(2+)</name>
        <dbReference type="ChEBI" id="CHEBI:18420"/>
        <label>3</label>
    </ligand>
</feature>
<feature type="helix" evidence="4">
    <location>
        <begin position="22"/>
        <end position="35"/>
    </location>
</feature>
<feature type="helix" evidence="4">
    <location>
        <begin position="42"/>
        <end position="51"/>
    </location>
</feature>
<feature type="helix" evidence="4">
    <location>
        <begin position="53"/>
        <end position="60"/>
    </location>
</feature>
<feature type="helix" evidence="4">
    <location>
        <begin position="66"/>
        <end position="85"/>
    </location>
</feature>
<feature type="helix" evidence="5">
    <location>
        <begin position="90"/>
        <end position="93"/>
    </location>
</feature>
<feature type="helix" evidence="4">
    <location>
        <begin position="95"/>
        <end position="110"/>
    </location>
</feature>
<feature type="helix" evidence="4">
    <location>
        <begin position="117"/>
        <end position="130"/>
    </location>
</feature>
<feature type="helix" evidence="4">
    <location>
        <begin position="135"/>
        <end position="160"/>
    </location>
</feature>
<feature type="helix" evidence="4">
    <location>
        <begin position="167"/>
        <end position="177"/>
    </location>
</feature>
<feature type="helix" evidence="4">
    <location>
        <begin position="181"/>
        <end position="191"/>
    </location>
</feature>
<feature type="helix" evidence="4">
    <location>
        <begin position="197"/>
        <end position="200"/>
    </location>
</feature>
<feature type="helix" evidence="4">
    <location>
        <begin position="203"/>
        <end position="222"/>
    </location>
</feature>
<feature type="helix" evidence="4">
    <location>
        <begin position="237"/>
        <end position="245"/>
    </location>
</feature>
<feature type="helix" evidence="4">
    <location>
        <begin position="249"/>
        <end position="280"/>
    </location>
</feature>
<feature type="helix" evidence="4">
    <location>
        <begin position="285"/>
        <end position="310"/>
    </location>
</feature>
<evidence type="ECO:0000250" key="1"/>
<evidence type="ECO:0000269" key="2">
    <source>
    </source>
</evidence>
<evidence type="ECO:0000305" key="3"/>
<evidence type="ECO:0007829" key="4">
    <source>
        <dbReference type="PDB" id="9C7I"/>
    </source>
</evidence>
<evidence type="ECO:0007829" key="5">
    <source>
        <dbReference type="PDB" id="9C7J"/>
    </source>
</evidence>
<proteinExistence type="evidence at protein level"/>
<reference key="1">
    <citation type="journal article" date="2008" name="J. Bacteriol.">
        <title>Genome sequence of the streptomycin-producing microorganism Streptomyces griseus IFO 13350.</title>
        <authorList>
            <person name="Ohnishi Y."/>
            <person name="Ishikawa J."/>
            <person name="Hara H."/>
            <person name="Suzuki H."/>
            <person name="Ikenoya M."/>
            <person name="Ikeda H."/>
            <person name="Yamashita A."/>
            <person name="Hattori M."/>
            <person name="Horinouchi S."/>
        </authorList>
    </citation>
    <scope>NUCLEOTIDE SEQUENCE [LARGE SCALE GENOMIC DNA]</scope>
    <source>
        <strain>JCM 4626 / CBS 651.72 / NBRC 13350 / KCC S-0626 / ISP 5235</strain>
    </source>
</reference>
<reference key="2">
    <citation type="journal article" date="2011" name="J. Biol. Chem.">
        <title>Characterization of a novel sesquiterpene cyclase involved in (+)-caryolan-1-ol biosynthesis in Streptomyces griseus.</title>
        <authorList>
            <person name="Nakano C."/>
            <person name="Horinouchi S."/>
            <person name="Ohnishi Y."/>
        </authorList>
    </citation>
    <scope>FUNCTION</scope>
    <scope>CATALYTIC ACTIVITY</scope>
    <scope>COFACTOR</scope>
    <scope>REACTION STEREOCHEMISTRY</scope>
    <scope>BIOPHYSICOCHEMICAL PROPERTIES</scope>
    <scope>GENE NAME</scope>
    <scope>INDUCTION</scope>
    <scope>DISRUPTION PHENOTYPE</scope>
    <scope>REACTION MECHANISM</scope>
    <source>
        <strain>JCM 4626 / CBS 651.72 / NBRC 13350 / KCC S-0626 / ISP 5235</strain>
    </source>
</reference>
<keyword id="KW-0002">3D-structure</keyword>
<keyword id="KW-0378">Hydrolase</keyword>
<keyword id="KW-0456">Lyase</keyword>
<keyword id="KW-0460">Magnesium</keyword>
<keyword id="KW-0464">Manganese</keyword>
<keyword id="KW-0479">Metal-binding</keyword>
<dbReference type="EC" id="4.2.1.138"/>
<dbReference type="EC" id="4.2.3.89"/>
<dbReference type="EMBL" id="AP009493">
    <property type="protein sequence ID" value="BAG18908.1"/>
    <property type="molecule type" value="Genomic_DNA"/>
</dbReference>
<dbReference type="PDB" id="9C7I">
    <property type="method" value="X-ray"/>
    <property type="resolution" value="2.33 A"/>
    <property type="chains" value="A/B/C/D=2-335"/>
</dbReference>
<dbReference type="PDB" id="9C7J">
    <property type="method" value="X-ray"/>
    <property type="resolution" value="2.65 A"/>
    <property type="chains" value="A/B/C/D=2-335"/>
</dbReference>
<dbReference type="PDBsum" id="9C7I"/>
<dbReference type="PDBsum" id="9C7J"/>
<dbReference type="SMR" id="B1W019"/>
<dbReference type="KEGG" id="sgr:SGR_2079"/>
<dbReference type="eggNOG" id="ENOG5033VJC">
    <property type="taxonomic scope" value="Bacteria"/>
</dbReference>
<dbReference type="HOGENOM" id="CLU_042538_4_0_11"/>
<dbReference type="UniPathway" id="UPA00213"/>
<dbReference type="Proteomes" id="UP000001685">
    <property type="component" value="Chromosome"/>
</dbReference>
<dbReference type="GO" id="GO:0016823">
    <property type="term" value="F:hydrolase activity, acting on acid carbon-carbon bonds, in ketonic substances"/>
    <property type="evidence" value="ECO:0000314"/>
    <property type="project" value="UniProtKB"/>
</dbReference>
<dbReference type="GO" id="GO:0000287">
    <property type="term" value="F:magnesium ion binding"/>
    <property type="evidence" value="ECO:0000314"/>
    <property type="project" value="UniProtKB"/>
</dbReference>
<dbReference type="GO" id="GO:0030145">
    <property type="term" value="F:manganese ion binding"/>
    <property type="evidence" value="ECO:0000314"/>
    <property type="project" value="UniProtKB"/>
</dbReference>
<dbReference type="GO" id="GO:0010334">
    <property type="term" value="F:sesquiterpene synthase activity"/>
    <property type="evidence" value="ECO:0000314"/>
    <property type="project" value="UniProtKB"/>
</dbReference>
<dbReference type="GO" id="GO:0051762">
    <property type="term" value="P:sesquiterpene biosynthetic process"/>
    <property type="evidence" value="ECO:0000314"/>
    <property type="project" value="UniProtKB"/>
</dbReference>
<dbReference type="GO" id="GO:0016106">
    <property type="term" value="P:sesquiterpenoid biosynthetic process"/>
    <property type="evidence" value="ECO:0000314"/>
    <property type="project" value="UniProtKB"/>
</dbReference>
<dbReference type="FunFam" id="1.10.600.10:FF:000044">
    <property type="entry name" value="(2Z,6E)-hedycaryol synthase"/>
    <property type="match status" value="1"/>
</dbReference>
<dbReference type="Gene3D" id="1.10.600.10">
    <property type="entry name" value="Farnesyl Diphosphate Synthase"/>
    <property type="match status" value="1"/>
</dbReference>
<dbReference type="InterPro" id="IPR008949">
    <property type="entry name" value="Isoprenoid_synthase_dom_sf"/>
</dbReference>
<dbReference type="InterPro" id="IPR034686">
    <property type="entry name" value="Terpene_cyclase-like_2"/>
</dbReference>
<dbReference type="PANTHER" id="PTHR35201:SF4">
    <property type="entry name" value="BETA-PINACENE SYNTHASE-RELATED"/>
    <property type="match status" value="1"/>
</dbReference>
<dbReference type="PANTHER" id="PTHR35201">
    <property type="entry name" value="TERPENE SYNTHASE"/>
    <property type="match status" value="1"/>
</dbReference>
<dbReference type="Pfam" id="PF19086">
    <property type="entry name" value="Terpene_syn_C_2"/>
    <property type="match status" value="1"/>
</dbReference>
<dbReference type="SFLD" id="SFLDS00005">
    <property type="entry name" value="Isoprenoid_Synthase_Type_I"/>
    <property type="match status" value="1"/>
</dbReference>
<dbReference type="SFLD" id="SFLDG01020">
    <property type="entry name" value="Terpene_Cyclase_Like_2"/>
    <property type="match status" value="1"/>
</dbReference>
<dbReference type="SUPFAM" id="SSF48576">
    <property type="entry name" value="Terpenoid synthases"/>
    <property type="match status" value="1"/>
</dbReference>